<sequence length="509" mass="54970">MDIRAAEISAILKEQIKNFGKEAEVSEVGQVLSVGDGIARVYGLDNVQAGEMVEFPGGIRGMALNLESDNVGVVIFGADRDIKEGDVVKRTGAIVDVPVGPELLGRVVDALGNPIDGKGPIKAKERRRVDVKAPGIIPRKSVHEPMSTGLKAIDALIPVGRGQRELVIGDRQTGKTAIILDTFLNQKPIHDNGPDKDKLYCVYVAVGQKRSTVAQFVKVLEERGALEYSIVVAATASDPAPMQYLAPFAGCAMGEYFRDNGQHALIGYDDLSKQAVAYRQMSLLLRRPPGREAYPGDVFYLHSRLLERAAKLNDENGAGSLTALPVIETQGNDVSAFIPTNVISITDGQIFLETNLFYQGIRPAVNVGLSVSRVGSSAQIKAMKQVAGSIKGELAQYREMAAFAQFGSDLDAATQRLLNRGARLTELLKQPQFSPLKTEEQVAVIYAGVNGYLDKLAVNQVGKFEEGLLASLRTEHKDVLEGIRNEKALTDDLKAKLKAAIDAFAKSFV</sequence>
<accession>Q2YLI5</accession>
<keyword id="KW-0066">ATP synthesis</keyword>
<keyword id="KW-0067">ATP-binding</keyword>
<keyword id="KW-0997">Cell inner membrane</keyword>
<keyword id="KW-1003">Cell membrane</keyword>
<keyword id="KW-0139">CF(1)</keyword>
<keyword id="KW-0375">Hydrogen ion transport</keyword>
<keyword id="KW-0406">Ion transport</keyword>
<keyword id="KW-0472">Membrane</keyword>
<keyword id="KW-0547">Nucleotide-binding</keyword>
<keyword id="KW-1185">Reference proteome</keyword>
<keyword id="KW-1278">Translocase</keyword>
<keyword id="KW-0813">Transport</keyword>
<gene>
    <name evidence="1" type="primary">atpA</name>
    <name type="ordered locus">BAB1_1809</name>
</gene>
<proteinExistence type="inferred from homology"/>
<organism>
    <name type="scientific">Brucella abortus (strain 2308)</name>
    <dbReference type="NCBI Taxonomy" id="359391"/>
    <lineage>
        <taxon>Bacteria</taxon>
        <taxon>Pseudomonadati</taxon>
        <taxon>Pseudomonadota</taxon>
        <taxon>Alphaproteobacteria</taxon>
        <taxon>Hyphomicrobiales</taxon>
        <taxon>Brucellaceae</taxon>
        <taxon>Brucella/Ochrobactrum group</taxon>
        <taxon>Brucella</taxon>
    </lineage>
</organism>
<comment type="function">
    <text evidence="1">Produces ATP from ADP in the presence of a proton gradient across the membrane. The alpha chain is a regulatory subunit.</text>
</comment>
<comment type="catalytic activity">
    <reaction evidence="1">
        <text>ATP + H2O + 4 H(+)(in) = ADP + phosphate + 5 H(+)(out)</text>
        <dbReference type="Rhea" id="RHEA:57720"/>
        <dbReference type="ChEBI" id="CHEBI:15377"/>
        <dbReference type="ChEBI" id="CHEBI:15378"/>
        <dbReference type="ChEBI" id="CHEBI:30616"/>
        <dbReference type="ChEBI" id="CHEBI:43474"/>
        <dbReference type="ChEBI" id="CHEBI:456216"/>
        <dbReference type="EC" id="7.1.2.2"/>
    </reaction>
</comment>
<comment type="subunit">
    <text evidence="1">F-type ATPases have 2 components, CF(1) - the catalytic core - and CF(0) - the membrane proton channel. CF(1) has five subunits: alpha(3), beta(3), gamma(1), delta(1), epsilon(1). CF(0) has three main subunits: a(1), b(2) and c(9-12). The alpha and beta chains form an alternating ring which encloses part of the gamma chain. CF(1) is attached to CF(0) by a central stalk formed by the gamma and epsilon chains, while a peripheral stalk is formed by the delta and b chains.</text>
</comment>
<comment type="subcellular location">
    <subcellularLocation>
        <location evidence="1">Cell inner membrane</location>
        <topology evidence="1">Peripheral membrane protein</topology>
    </subcellularLocation>
</comment>
<comment type="similarity">
    <text evidence="1">Belongs to the ATPase alpha/beta chains family.</text>
</comment>
<feature type="chain" id="PRO_0000238214" description="ATP synthase subunit alpha">
    <location>
        <begin position="1"/>
        <end position="509"/>
    </location>
</feature>
<feature type="binding site" evidence="1">
    <location>
        <begin position="169"/>
        <end position="176"/>
    </location>
    <ligand>
        <name>ATP</name>
        <dbReference type="ChEBI" id="CHEBI:30616"/>
    </ligand>
</feature>
<feature type="site" description="Required for activity" evidence="1">
    <location>
        <position position="370"/>
    </location>
</feature>
<name>ATPA_BRUA2</name>
<dbReference type="EC" id="7.1.2.2" evidence="1"/>
<dbReference type="EMBL" id="AM040264">
    <property type="protein sequence ID" value="CAJ11765.1"/>
    <property type="molecule type" value="Genomic_DNA"/>
</dbReference>
<dbReference type="RefSeq" id="WP_002964878.1">
    <property type="nucleotide sequence ID" value="NZ_KN046823.1"/>
</dbReference>
<dbReference type="SMR" id="Q2YLI5"/>
<dbReference type="STRING" id="359391.BAB1_1809"/>
<dbReference type="GeneID" id="93017859"/>
<dbReference type="KEGG" id="bmf:BAB1_1809"/>
<dbReference type="PATRIC" id="fig|359391.11.peg.319"/>
<dbReference type="HOGENOM" id="CLU_010091_2_1_5"/>
<dbReference type="PhylomeDB" id="Q2YLI5"/>
<dbReference type="Proteomes" id="UP000002719">
    <property type="component" value="Chromosome I"/>
</dbReference>
<dbReference type="GO" id="GO:0005886">
    <property type="term" value="C:plasma membrane"/>
    <property type="evidence" value="ECO:0007669"/>
    <property type="project" value="UniProtKB-SubCell"/>
</dbReference>
<dbReference type="GO" id="GO:0045259">
    <property type="term" value="C:proton-transporting ATP synthase complex"/>
    <property type="evidence" value="ECO:0007669"/>
    <property type="project" value="UniProtKB-KW"/>
</dbReference>
<dbReference type="GO" id="GO:0043531">
    <property type="term" value="F:ADP binding"/>
    <property type="evidence" value="ECO:0007669"/>
    <property type="project" value="TreeGrafter"/>
</dbReference>
<dbReference type="GO" id="GO:0005524">
    <property type="term" value="F:ATP binding"/>
    <property type="evidence" value="ECO:0007669"/>
    <property type="project" value="UniProtKB-UniRule"/>
</dbReference>
<dbReference type="GO" id="GO:0046933">
    <property type="term" value="F:proton-transporting ATP synthase activity, rotational mechanism"/>
    <property type="evidence" value="ECO:0007669"/>
    <property type="project" value="UniProtKB-UniRule"/>
</dbReference>
<dbReference type="CDD" id="cd18113">
    <property type="entry name" value="ATP-synt_F1_alpha_C"/>
    <property type="match status" value="1"/>
</dbReference>
<dbReference type="CDD" id="cd18116">
    <property type="entry name" value="ATP-synt_F1_alpha_N"/>
    <property type="match status" value="1"/>
</dbReference>
<dbReference type="CDD" id="cd01132">
    <property type="entry name" value="F1-ATPase_alpha_CD"/>
    <property type="match status" value="1"/>
</dbReference>
<dbReference type="FunFam" id="1.20.150.20:FF:000001">
    <property type="entry name" value="ATP synthase subunit alpha"/>
    <property type="match status" value="1"/>
</dbReference>
<dbReference type="FunFam" id="2.40.30.20:FF:000001">
    <property type="entry name" value="ATP synthase subunit alpha"/>
    <property type="match status" value="1"/>
</dbReference>
<dbReference type="FunFam" id="3.40.50.300:FF:002432">
    <property type="entry name" value="ATP synthase subunit alpha, mitochondrial"/>
    <property type="match status" value="1"/>
</dbReference>
<dbReference type="Gene3D" id="2.40.30.20">
    <property type="match status" value="1"/>
</dbReference>
<dbReference type="Gene3D" id="1.20.150.20">
    <property type="entry name" value="ATP synthase alpha/beta chain, C-terminal domain"/>
    <property type="match status" value="1"/>
</dbReference>
<dbReference type="Gene3D" id="3.40.50.300">
    <property type="entry name" value="P-loop containing nucleotide triphosphate hydrolases"/>
    <property type="match status" value="1"/>
</dbReference>
<dbReference type="HAMAP" id="MF_01346">
    <property type="entry name" value="ATP_synth_alpha_bact"/>
    <property type="match status" value="1"/>
</dbReference>
<dbReference type="InterPro" id="IPR023366">
    <property type="entry name" value="ATP_synth_asu-like_sf"/>
</dbReference>
<dbReference type="InterPro" id="IPR000793">
    <property type="entry name" value="ATP_synth_asu_C"/>
</dbReference>
<dbReference type="InterPro" id="IPR038376">
    <property type="entry name" value="ATP_synth_asu_C_sf"/>
</dbReference>
<dbReference type="InterPro" id="IPR033732">
    <property type="entry name" value="ATP_synth_F1_a_nt-bd_dom"/>
</dbReference>
<dbReference type="InterPro" id="IPR005294">
    <property type="entry name" value="ATP_synth_F1_asu"/>
</dbReference>
<dbReference type="InterPro" id="IPR020003">
    <property type="entry name" value="ATPase_a/bsu_AS"/>
</dbReference>
<dbReference type="InterPro" id="IPR004100">
    <property type="entry name" value="ATPase_F1/V1/A1_a/bsu_N"/>
</dbReference>
<dbReference type="InterPro" id="IPR036121">
    <property type="entry name" value="ATPase_F1/V1/A1_a/bsu_N_sf"/>
</dbReference>
<dbReference type="InterPro" id="IPR000194">
    <property type="entry name" value="ATPase_F1/V1/A1_a/bsu_nucl-bd"/>
</dbReference>
<dbReference type="InterPro" id="IPR027417">
    <property type="entry name" value="P-loop_NTPase"/>
</dbReference>
<dbReference type="NCBIfam" id="TIGR00962">
    <property type="entry name" value="atpA"/>
    <property type="match status" value="1"/>
</dbReference>
<dbReference type="NCBIfam" id="NF009884">
    <property type="entry name" value="PRK13343.1"/>
    <property type="match status" value="1"/>
</dbReference>
<dbReference type="PANTHER" id="PTHR48082">
    <property type="entry name" value="ATP SYNTHASE SUBUNIT ALPHA, MITOCHONDRIAL"/>
    <property type="match status" value="1"/>
</dbReference>
<dbReference type="PANTHER" id="PTHR48082:SF2">
    <property type="entry name" value="ATP SYNTHASE SUBUNIT ALPHA, MITOCHONDRIAL"/>
    <property type="match status" value="1"/>
</dbReference>
<dbReference type="Pfam" id="PF00006">
    <property type="entry name" value="ATP-synt_ab"/>
    <property type="match status" value="1"/>
</dbReference>
<dbReference type="Pfam" id="PF00306">
    <property type="entry name" value="ATP-synt_ab_C"/>
    <property type="match status" value="1"/>
</dbReference>
<dbReference type="Pfam" id="PF02874">
    <property type="entry name" value="ATP-synt_ab_N"/>
    <property type="match status" value="1"/>
</dbReference>
<dbReference type="PIRSF" id="PIRSF039088">
    <property type="entry name" value="F_ATPase_subunit_alpha"/>
    <property type="match status" value="1"/>
</dbReference>
<dbReference type="SUPFAM" id="SSF47917">
    <property type="entry name" value="C-terminal domain of alpha and beta subunits of F1 ATP synthase"/>
    <property type="match status" value="1"/>
</dbReference>
<dbReference type="SUPFAM" id="SSF50615">
    <property type="entry name" value="N-terminal domain of alpha and beta subunits of F1 ATP synthase"/>
    <property type="match status" value="1"/>
</dbReference>
<dbReference type="SUPFAM" id="SSF52540">
    <property type="entry name" value="P-loop containing nucleoside triphosphate hydrolases"/>
    <property type="match status" value="1"/>
</dbReference>
<dbReference type="PROSITE" id="PS00152">
    <property type="entry name" value="ATPASE_ALPHA_BETA"/>
    <property type="match status" value="1"/>
</dbReference>
<evidence type="ECO:0000255" key="1">
    <source>
        <dbReference type="HAMAP-Rule" id="MF_01346"/>
    </source>
</evidence>
<protein>
    <recommendedName>
        <fullName evidence="1">ATP synthase subunit alpha</fullName>
        <ecNumber evidence="1">7.1.2.2</ecNumber>
    </recommendedName>
    <alternativeName>
        <fullName evidence="1">ATP synthase F1 sector subunit alpha</fullName>
    </alternativeName>
    <alternativeName>
        <fullName evidence="1">F-ATPase subunit alpha</fullName>
    </alternativeName>
</protein>
<reference key="1">
    <citation type="journal article" date="2005" name="Infect. Immun.">
        <title>Whole-genome analyses of speciation events in pathogenic Brucellae.</title>
        <authorList>
            <person name="Chain P.S."/>
            <person name="Comerci D.J."/>
            <person name="Tolmasky M.E."/>
            <person name="Larimer F.W."/>
            <person name="Malfatti S.A."/>
            <person name="Vergez L.M."/>
            <person name="Aguero F."/>
            <person name="Land M.L."/>
            <person name="Ugalde R.A."/>
            <person name="Garcia E."/>
        </authorList>
    </citation>
    <scope>NUCLEOTIDE SEQUENCE [LARGE SCALE GENOMIC DNA]</scope>
    <source>
        <strain>2308</strain>
    </source>
</reference>